<sequence length="244" mass="27967">MKIDILTLFPDMFTGVFGSSILKKAQEKEAVELRVVNFRDYTTSKHNSVDDYPYGGGAGMVLTPQPIFDAVEDLTKETERKPRVVLMCPQGERFTQKKAEELAEEEHLIFVCGHYEGYDERIREHLVTDEISIGDYVLTGGELASMVITDSVVRLLPGVLGNHASQVEDSFSTGLLEHPHYTRPADFRGMKVPDVLMSGNHKNIDEWRHKESLRRTYTRRPDLLEERELSKQEKKWLEQIKEGK</sequence>
<protein>
    <recommendedName>
        <fullName evidence="1">tRNA (guanine-N(1)-)-methyltransferase</fullName>
        <ecNumber evidence="1">2.1.1.228</ecNumber>
    </recommendedName>
    <alternativeName>
        <fullName evidence="1">M1G-methyltransferase</fullName>
    </alternativeName>
    <alternativeName>
        <fullName evidence="1">tRNA [GM37] methyltransferase</fullName>
    </alternativeName>
</protein>
<proteinExistence type="inferred from homology"/>
<comment type="function">
    <text evidence="1">Specifically methylates guanosine-37 in various tRNAs.</text>
</comment>
<comment type="catalytic activity">
    <reaction evidence="1">
        <text>guanosine(37) in tRNA + S-adenosyl-L-methionine = N(1)-methylguanosine(37) in tRNA + S-adenosyl-L-homocysteine + H(+)</text>
        <dbReference type="Rhea" id="RHEA:36899"/>
        <dbReference type="Rhea" id="RHEA-COMP:10145"/>
        <dbReference type="Rhea" id="RHEA-COMP:10147"/>
        <dbReference type="ChEBI" id="CHEBI:15378"/>
        <dbReference type="ChEBI" id="CHEBI:57856"/>
        <dbReference type="ChEBI" id="CHEBI:59789"/>
        <dbReference type="ChEBI" id="CHEBI:73542"/>
        <dbReference type="ChEBI" id="CHEBI:74269"/>
        <dbReference type="EC" id="2.1.1.228"/>
    </reaction>
</comment>
<comment type="subunit">
    <text evidence="1">Homodimer.</text>
</comment>
<comment type="subcellular location">
    <subcellularLocation>
        <location evidence="1">Cytoplasm</location>
    </subcellularLocation>
</comment>
<comment type="similarity">
    <text evidence="1">Belongs to the RNA methyltransferase TrmD family.</text>
</comment>
<feature type="chain" id="PRO_0000060327" description="tRNA (guanine-N(1)-)-methyltransferase">
    <location>
        <begin position="1"/>
        <end position="244"/>
    </location>
</feature>
<feature type="binding site" evidence="1">
    <location>
        <position position="113"/>
    </location>
    <ligand>
        <name>S-adenosyl-L-methionine</name>
        <dbReference type="ChEBI" id="CHEBI:59789"/>
    </ligand>
</feature>
<feature type="binding site" evidence="1">
    <location>
        <begin position="133"/>
        <end position="138"/>
    </location>
    <ligand>
        <name>S-adenosyl-L-methionine</name>
        <dbReference type="ChEBI" id="CHEBI:59789"/>
    </ligand>
</feature>
<reference key="1">
    <citation type="journal article" date="2006" name="J. Bacteriol.">
        <title>Pathogenomic sequence analysis of Bacillus cereus and Bacillus thuringiensis isolates closely related to Bacillus anthracis.</title>
        <authorList>
            <person name="Han C.S."/>
            <person name="Xie G."/>
            <person name="Challacombe J.F."/>
            <person name="Altherr M.R."/>
            <person name="Bhotika S.S."/>
            <person name="Bruce D."/>
            <person name="Campbell C.S."/>
            <person name="Campbell M.L."/>
            <person name="Chen J."/>
            <person name="Chertkov O."/>
            <person name="Cleland C."/>
            <person name="Dimitrijevic M."/>
            <person name="Doggett N.A."/>
            <person name="Fawcett J.J."/>
            <person name="Glavina T."/>
            <person name="Goodwin L.A."/>
            <person name="Hill K.K."/>
            <person name="Hitchcock P."/>
            <person name="Jackson P.J."/>
            <person name="Keim P."/>
            <person name="Kewalramani A.R."/>
            <person name="Longmire J."/>
            <person name="Lucas S."/>
            <person name="Malfatti S."/>
            <person name="McMurry K."/>
            <person name="Meincke L.J."/>
            <person name="Misra M."/>
            <person name="Moseman B.L."/>
            <person name="Mundt M."/>
            <person name="Munk A.C."/>
            <person name="Okinaka R.T."/>
            <person name="Parson-Quintana B."/>
            <person name="Reilly L.P."/>
            <person name="Richardson P."/>
            <person name="Robinson D.L."/>
            <person name="Rubin E."/>
            <person name="Saunders E."/>
            <person name="Tapia R."/>
            <person name="Tesmer J.G."/>
            <person name="Thayer N."/>
            <person name="Thompson L.S."/>
            <person name="Tice H."/>
            <person name="Ticknor L.O."/>
            <person name="Wills P.L."/>
            <person name="Brettin T.S."/>
            <person name="Gilna P."/>
        </authorList>
    </citation>
    <scope>NUCLEOTIDE SEQUENCE [LARGE SCALE GENOMIC DNA]</scope>
    <source>
        <strain>97-27</strain>
    </source>
</reference>
<accession>Q6HEX4</accession>
<keyword id="KW-0963">Cytoplasm</keyword>
<keyword id="KW-0489">Methyltransferase</keyword>
<keyword id="KW-0949">S-adenosyl-L-methionine</keyword>
<keyword id="KW-0808">Transferase</keyword>
<keyword id="KW-0819">tRNA processing</keyword>
<organism>
    <name type="scientific">Bacillus thuringiensis subsp. konkukian (strain 97-27)</name>
    <dbReference type="NCBI Taxonomy" id="281309"/>
    <lineage>
        <taxon>Bacteria</taxon>
        <taxon>Bacillati</taxon>
        <taxon>Bacillota</taxon>
        <taxon>Bacilli</taxon>
        <taxon>Bacillales</taxon>
        <taxon>Bacillaceae</taxon>
        <taxon>Bacillus</taxon>
        <taxon>Bacillus cereus group</taxon>
    </lineage>
</organism>
<dbReference type="EC" id="2.1.1.228" evidence="1"/>
<dbReference type="EMBL" id="AE017355">
    <property type="protein sequence ID" value="AAT60611.1"/>
    <property type="molecule type" value="Genomic_DNA"/>
</dbReference>
<dbReference type="RefSeq" id="WP_000686892.1">
    <property type="nucleotide sequence ID" value="NC_005957.1"/>
</dbReference>
<dbReference type="RefSeq" id="YP_037902.1">
    <property type="nucleotide sequence ID" value="NC_005957.1"/>
</dbReference>
<dbReference type="SMR" id="Q6HEX4"/>
<dbReference type="GeneID" id="93007271"/>
<dbReference type="KEGG" id="btk:BT9727_3582"/>
<dbReference type="PATRIC" id="fig|281309.8.peg.3820"/>
<dbReference type="HOGENOM" id="CLU_047363_0_1_9"/>
<dbReference type="Proteomes" id="UP000001301">
    <property type="component" value="Chromosome"/>
</dbReference>
<dbReference type="GO" id="GO:0005829">
    <property type="term" value="C:cytosol"/>
    <property type="evidence" value="ECO:0007669"/>
    <property type="project" value="TreeGrafter"/>
</dbReference>
<dbReference type="GO" id="GO:0052906">
    <property type="term" value="F:tRNA (guanine(37)-N1)-methyltransferase activity"/>
    <property type="evidence" value="ECO:0007669"/>
    <property type="project" value="UniProtKB-UniRule"/>
</dbReference>
<dbReference type="GO" id="GO:0002939">
    <property type="term" value="P:tRNA N1-guanine methylation"/>
    <property type="evidence" value="ECO:0007669"/>
    <property type="project" value="TreeGrafter"/>
</dbReference>
<dbReference type="CDD" id="cd18080">
    <property type="entry name" value="TrmD-like"/>
    <property type="match status" value="1"/>
</dbReference>
<dbReference type="FunFam" id="1.10.1270.20:FF:000001">
    <property type="entry name" value="tRNA (guanine-N(1)-)-methyltransferase"/>
    <property type="match status" value="1"/>
</dbReference>
<dbReference type="FunFam" id="3.40.1280.10:FF:000001">
    <property type="entry name" value="tRNA (guanine-N(1)-)-methyltransferase"/>
    <property type="match status" value="1"/>
</dbReference>
<dbReference type="Gene3D" id="3.40.1280.10">
    <property type="match status" value="1"/>
</dbReference>
<dbReference type="Gene3D" id="1.10.1270.20">
    <property type="entry name" value="tRNA(m1g37)methyltransferase, domain 2"/>
    <property type="match status" value="1"/>
</dbReference>
<dbReference type="HAMAP" id="MF_00605">
    <property type="entry name" value="TrmD"/>
    <property type="match status" value="1"/>
</dbReference>
<dbReference type="InterPro" id="IPR029028">
    <property type="entry name" value="Alpha/beta_knot_MTases"/>
</dbReference>
<dbReference type="InterPro" id="IPR023148">
    <property type="entry name" value="tRNA_m1G_MeTrfase_C_sf"/>
</dbReference>
<dbReference type="InterPro" id="IPR002649">
    <property type="entry name" value="tRNA_m1G_MeTrfase_TrmD"/>
</dbReference>
<dbReference type="InterPro" id="IPR029026">
    <property type="entry name" value="tRNA_m1G_MTases_N"/>
</dbReference>
<dbReference type="InterPro" id="IPR016009">
    <property type="entry name" value="tRNA_MeTrfase_TRMD/TRM10"/>
</dbReference>
<dbReference type="NCBIfam" id="NF000648">
    <property type="entry name" value="PRK00026.1"/>
    <property type="match status" value="1"/>
</dbReference>
<dbReference type="NCBIfam" id="TIGR00088">
    <property type="entry name" value="trmD"/>
    <property type="match status" value="1"/>
</dbReference>
<dbReference type="PANTHER" id="PTHR46417">
    <property type="entry name" value="TRNA (GUANINE-N(1)-)-METHYLTRANSFERASE"/>
    <property type="match status" value="1"/>
</dbReference>
<dbReference type="PANTHER" id="PTHR46417:SF1">
    <property type="entry name" value="TRNA (GUANINE-N(1)-)-METHYLTRANSFERASE"/>
    <property type="match status" value="1"/>
</dbReference>
<dbReference type="Pfam" id="PF01746">
    <property type="entry name" value="tRNA_m1G_MT"/>
    <property type="match status" value="1"/>
</dbReference>
<dbReference type="PIRSF" id="PIRSF000386">
    <property type="entry name" value="tRNA_mtase"/>
    <property type="match status" value="1"/>
</dbReference>
<dbReference type="SUPFAM" id="SSF75217">
    <property type="entry name" value="alpha/beta knot"/>
    <property type="match status" value="1"/>
</dbReference>
<evidence type="ECO:0000255" key="1">
    <source>
        <dbReference type="HAMAP-Rule" id="MF_00605"/>
    </source>
</evidence>
<gene>
    <name evidence="1" type="primary">trmD</name>
    <name type="ordered locus">BT9727_3582</name>
</gene>
<name>TRMD_BACHK</name>